<organism>
    <name type="scientific">Xanthomonas axonopodis pv. citri (strain 306)</name>
    <dbReference type="NCBI Taxonomy" id="190486"/>
    <lineage>
        <taxon>Bacteria</taxon>
        <taxon>Pseudomonadati</taxon>
        <taxon>Pseudomonadota</taxon>
        <taxon>Gammaproteobacteria</taxon>
        <taxon>Lysobacterales</taxon>
        <taxon>Lysobacteraceae</taxon>
        <taxon>Xanthomonas</taxon>
    </lineage>
</organism>
<reference key="1">
    <citation type="journal article" date="2002" name="Nature">
        <title>Comparison of the genomes of two Xanthomonas pathogens with differing host specificities.</title>
        <authorList>
            <person name="da Silva A.C.R."/>
            <person name="Ferro J.A."/>
            <person name="Reinach F.C."/>
            <person name="Farah C.S."/>
            <person name="Furlan L.R."/>
            <person name="Quaggio R.B."/>
            <person name="Monteiro-Vitorello C.B."/>
            <person name="Van Sluys M.A."/>
            <person name="Almeida N.F. Jr."/>
            <person name="Alves L.M.C."/>
            <person name="do Amaral A.M."/>
            <person name="Bertolini M.C."/>
            <person name="Camargo L.E.A."/>
            <person name="Camarotte G."/>
            <person name="Cannavan F."/>
            <person name="Cardozo J."/>
            <person name="Chambergo F."/>
            <person name="Ciapina L.P."/>
            <person name="Cicarelli R.M.B."/>
            <person name="Coutinho L.L."/>
            <person name="Cursino-Santos J.R."/>
            <person name="El-Dorry H."/>
            <person name="Faria J.B."/>
            <person name="Ferreira A.J.S."/>
            <person name="Ferreira R.C.C."/>
            <person name="Ferro M.I.T."/>
            <person name="Formighieri E.F."/>
            <person name="Franco M.C."/>
            <person name="Greggio C.C."/>
            <person name="Gruber A."/>
            <person name="Katsuyama A.M."/>
            <person name="Kishi L.T."/>
            <person name="Leite R.P."/>
            <person name="Lemos E.G.M."/>
            <person name="Lemos M.V.F."/>
            <person name="Locali E.C."/>
            <person name="Machado M.A."/>
            <person name="Madeira A.M.B.N."/>
            <person name="Martinez-Rossi N.M."/>
            <person name="Martins E.C."/>
            <person name="Meidanis J."/>
            <person name="Menck C.F.M."/>
            <person name="Miyaki C.Y."/>
            <person name="Moon D.H."/>
            <person name="Moreira L.M."/>
            <person name="Novo M.T.M."/>
            <person name="Okura V.K."/>
            <person name="Oliveira M.C."/>
            <person name="Oliveira V.R."/>
            <person name="Pereira H.A."/>
            <person name="Rossi A."/>
            <person name="Sena J.A.D."/>
            <person name="Silva C."/>
            <person name="de Souza R.F."/>
            <person name="Spinola L.A.F."/>
            <person name="Takita M.A."/>
            <person name="Tamura R.E."/>
            <person name="Teixeira E.C."/>
            <person name="Tezza R.I.D."/>
            <person name="Trindade dos Santos M."/>
            <person name="Truffi D."/>
            <person name="Tsai S.M."/>
            <person name="White F.F."/>
            <person name="Setubal J.C."/>
            <person name="Kitajima J.P."/>
        </authorList>
    </citation>
    <scope>NUCLEOTIDE SEQUENCE [LARGE SCALE GENOMIC DNA]</scope>
    <source>
        <strain>306</strain>
    </source>
</reference>
<comment type="similarity">
    <text evidence="2">Belongs to the MacroD-type family.</text>
</comment>
<comment type="sequence caution" evidence="2">
    <conflict type="erroneous initiation">
        <sequence resource="EMBL-CDS" id="AAM38186"/>
    </conflict>
</comment>
<gene>
    <name type="ordered locus">XAC3343</name>
</gene>
<proteinExistence type="inferred from homology"/>
<protein>
    <recommendedName>
        <fullName>Macro domain-containing protein XAC3343</fullName>
    </recommendedName>
</protein>
<dbReference type="EMBL" id="AE008923">
    <property type="protein sequence ID" value="AAM38186.1"/>
    <property type="status" value="ALT_INIT"/>
    <property type="molecule type" value="Genomic_DNA"/>
</dbReference>
<dbReference type="RefSeq" id="WP_005930441.1">
    <property type="nucleotide sequence ID" value="NC_003919.1"/>
</dbReference>
<dbReference type="SMR" id="Q8PHB6"/>
<dbReference type="KEGG" id="xac:XAC3343"/>
<dbReference type="eggNOG" id="COG2110">
    <property type="taxonomic scope" value="Bacteria"/>
</dbReference>
<dbReference type="HOGENOM" id="CLU_046550_5_1_6"/>
<dbReference type="Proteomes" id="UP000000576">
    <property type="component" value="Chromosome"/>
</dbReference>
<dbReference type="GO" id="GO:0061463">
    <property type="term" value="F:O-acetyl-ADP-ribose deacetylase activity"/>
    <property type="evidence" value="ECO:0007669"/>
    <property type="project" value="TreeGrafter"/>
</dbReference>
<dbReference type="CDD" id="cd02908">
    <property type="entry name" value="Macro_OAADPr_deacetylase"/>
    <property type="match status" value="1"/>
</dbReference>
<dbReference type="Gene3D" id="3.40.220.10">
    <property type="entry name" value="Leucine Aminopeptidase, subunit E, domain 1"/>
    <property type="match status" value="1"/>
</dbReference>
<dbReference type="InterPro" id="IPR002589">
    <property type="entry name" value="Macro_dom"/>
</dbReference>
<dbReference type="InterPro" id="IPR043472">
    <property type="entry name" value="Macro_dom-like"/>
</dbReference>
<dbReference type="NCBIfam" id="NF001661">
    <property type="entry name" value="PRK00431.1-2"/>
    <property type="match status" value="1"/>
</dbReference>
<dbReference type="NCBIfam" id="NF001664">
    <property type="entry name" value="PRK00431.1-6"/>
    <property type="match status" value="1"/>
</dbReference>
<dbReference type="PANTHER" id="PTHR11106">
    <property type="entry name" value="GANGLIOSIDE INDUCED DIFFERENTIATION ASSOCIATED PROTEIN 2-RELATED"/>
    <property type="match status" value="1"/>
</dbReference>
<dbReference type="PANTHER" id="PTHR11106:SF27">
    <property type="entry name" value="MACRO DOMAIN-CONTAINING PROTEIN"/>
    <property type="match status" value="1"/>
</dbReference>
<dbReference type="Pfam" id="PF01661">
    <property type="entry name" value="Macro"/>
    <property type="match status" value="1"/>
</dbReference>
<dbReference type="SMART" id="SM00506">
    <property type="entry name" value="A1pp"/>
    <property type="match status" value="1"/>
</dbReference>
<dbReference type="SUPFAM" id="SSF52949">
    <property type="entry name" value="Macro domain-like"/>
    <property type="match status" value="1"/>
</dbReference>
<dbReference type="PROSITE" id="PS51154">
    <property type="entry name" value="MACRO"/>
    <property type="match status" value="1"/>
</dbReference>
<feature type="chain" id="PRO_0000089225" description="Macro domain-containing protein XAC3343">
    <location>
        <begin position="1"/>
        <end position="179"/>
    </location>
</feature>
<feature type="domain" description="Macro" evidence="1">
    <location>
        <begin position="1"/>
        <end position="175"/>
    </location>
</feature>
<evidence type="ECO:0000255" key="1">
    <source>
        <dbReference type="PROSITE-ProRule" id="PRU00490"/>
    </source>
</evidence>
<evidence type="ECO:0000305" key="2"/>
<sequence length="179" mass="19808">MRIEVWQGDITELDVDVIVNAANESLLGGGGVDGAIHRAAGPRLLEACEALPQVRPGVRCPTGEIRITDGFDLKARHIFHTVGPVWRDGRHNEPEQLANCYWQSLKLAEQMMLHSIAFPAISCGIYGYPLHQAARIAVTETRDWQRSHKVPKHIVLVAYNEATYKAYQQALATQETAAA</sequence>
<name>Y3343_XANAC</name>
<accession>Q8PHB6</accession>